<dbReference type="EC" id="3.6.-.-" evidence="1"/>
<dbReference type="EMBL" id="CP000746">
    <property type="protein sequence ID" value="ABR75323.1"/>
    <property type="molecule type" value="Genomic_DNA"/>
</dbReference>
<dbReference type="RefSeq" id="WP_012073700.1">
    <property type="nucleotide sequence ID" value="NC_009655.1"/>
</dbReference>
<dbReference type="SMR" id="A6VQS6"/>
<dbReference type="STRING" id="339671.Asuc_1976"/>
<dbReference type="KEGG" id="asu:Asuc_1976"/>
<dbReference type="eggNOG" id="COG0486">
    <property type="taxonomic scope" value="Bacteria"/>
</dbReference>
<dbReference type="HOGENOM" id="CLU_019624_4_1_6"/>
<dbReference type="OrthoDB" id="9805918at2"/>
<dbReference type="Proteomes" id="UP000001114">
    <property type="component" value="Chromosome"/>
</dbReference>
<dbReference type="GO" id="GO:0005829">
    <property type="term" value="C:cytosol"/>
    <property type="evidence" value="ECO:0007669"/>
    <property type="project" value="TreeGrafter"/>
</dbReference>
<dbReference type="GO" id="GO:0005525">
    <property type="term" value="F:GTP binding"/>
    <property type="evidence" value="ECO:0007669"/>
    <property type="project" value="UniProtKB-UniRule"/>
</dbReference>
<dbReference type="GO" id="GO:0003924">
    <property type="term" value="F:GTPase activity"/>
    <property type="evidence" value="ECO:0007669"/>
    <property type="project" value="UniProtKB-UniRule"/>
</dbReference>
<dbReference type="GO" id="GO:0046872">
    <property type="term" value="F:metal ion binding"/>
    <property type="evidence" value="ECO:0007669"/>
    <property type="project" value="UniProtKB-KW"/>
</dbReference>
<dbReference type="GO" id="GO:0030488">
    <property type="term" value="P:tRNA methylation"/>
    <property type="evidence" value="ECO:0007669"/>
    <property type="project" value="TreeGrafter"/>
</dbReference>
<dbReference type="GO" id="GO:0002098">
    <property type="term" value="P:tRNA wobble uridine modification"/>
    <property type="evidence" value="ECO:0007669"/>
    <property type="project" value="TreeGrafter"/>
</dbReference>
<dbReference type="CDD" id="cd04164">
    <property type="entry name" value="trmE"/>
    <property type="match status" value="1"/>
</dbReference>
<dbReference type="CDD" id="cd14858">
    <property type="entry name" value="TrmE_N"/>
    <property type="match status" value="1"/>
</dbReference>
<dbReference type="FunFam" id="3.30.1360.120:FF:000001">
    <property type="entry name" value="tRNA modification GTPase MnmE"/>
    <property type="match status" value="1"/>
</dbReference>
<dbReference type="FunFam" id="3.40.50.300:FF:000249">
    <property type="entry name" value="tRNA modification GTPase MnmE"/>
    <property type="match status" value="1"/>
</dbReference>
<dbReference type="Gene3D" id="3.40.50.300">
    <property type="entry name" value="P-loop containing nucleotide triphosphate hydrolases"/>
    <property type="match status" value="1"/>
</dbReference>
<dbReference type="Gene3D" id="3.30.1360.120">
    <property type="entry name" value="Probable tRNA modification gtpase trme, domain 1"/>
    <property type="match status" value="1"/>
</dbReference>
<dbReference type="Gene3D" id="1.20.120.430">
    <property type="entry name" value="tRNA modification GTPase MnmE domain 2"/>
    <property type="match status" value="1"/>
</dbReference>
<dbReference type="HAMAP" id="MF_00379">
    <property type="entry name" value="GTPase_MnmE"/>
    <property type="match status" value="1"/>
</dbReference>
<dbReference type="InterPro" id="IPR031168">
    <property type="entry name" value="G_TrmE"/>
</dbReference>
<dbReference type="InterPro" id="IPR006073">
    <property type="entry name" value="GTP-bd"/>
</dbReference>
<dbReference type="InterPro" id="IPR018948">
    <property type="entry name" value="GTP-bd_TrmE_N"/>
</dbReference>
<dbReference type="InterPro" id="IPR004520">
    <property type="entry name" value="GTPase_MnmE"/>
</dbReference>
<dbReference type="InterPro" id="IPR027368">
    <property type="entry name" value="MnmE_dom2"/>
</dbReference>
<dbReference type="InterPro" id="IPR025867">
    <property type="entry name" value="MnmE_helical"/>
</dbReference>
<dbReference type="InterPro" id="IPR027417">
    <property type="entry name" value="P-loop_NTPase"/>
</dbReference>
<dbReference type="InterPro" id="IPR005225">
    <property type="entry name" value="Small_GTP-bd"/>
</dbReference>
<dbReference type="InterPro" id="IPR027266">
    <property type="entry name" value="TrmE/GcvT_dom1"/>
</dbReference>
<dbReference type="NCBIfam" id="TIGR00450">
    <property type="entry name" value="mnmE_trmE_thdF"/>
    <property type="match status" value="1"/>
</dbReference>
<dbReference type="NCBIfam" id="NF003661">
    <property type="entry name" value="PRK05291.1-3"/>
    <property type="match status" value="1"/>
</dbReference>
<dbReference type="NCBIfam" id="TIGR00231">
    <property type="entry name" value="small_GTP"/>
    <property type="match status" value="1"/>
</dbReference>
<dbReference type="PANTHER" id="PTHR42714">
    <property type="entry name" value="TRNA MODIFICATION GTPASE GTPBP3"/>
    <property type="match status" value="1"/>
</dbReference>
<dbReference type="PANTHER" id="PTHR42714:SF2">
    <property type="entry name" value="TRNA MODIFICATION GTPASE GTPBP3, MITOCHONDRIAL"/>
    <property type="match status" value="1"/>
</dbReference>
<dbReference type="Pfam" id="PF01926">
    <property type="entry name" value="MMR_HSR1"/>
    <property type="match status" value="1"/>
</dbReference>
<dbReference type="Pfam" id="PF12631">
    <property type="entry name" value="MnmE_helical"/>
    <property type="match status" value="1"/>
</dbReference>
<dbReference type="Pfam" id="PF10396">
    <property type="entry name" value="TrmE_N"/>
    <property type="match status" value="1"/>
</dbReference>
<dbReference type="SUPFAM" id="SSF52540">
    <property type="entry name" value="P-loop containing nucleoside triphosphate hydrolases"/>
    <property type="match status" value="1"/>
</dbReference>
<dbReference type="SUPFAM" id="SSF116878">
    <property type="entry name" value="TrmE connector domain"/>
    <property type="match status" value="1"/>
</dbReference>
<dbReference type="PROSITE" id="PS51709">
    <property type="entry name" value="G_TRME"/>
    <property type="match status" value="1"/>
</dbReference>
<proteinExistence type="inferred from homology"/>
<organism>
    <name type="scientific">Actinobacillus succinogenes (strain ATCC 55618 / DSM 22257 / CCUG 43843 / 130Z)</name>
    <dbReference type="NCBI Taxonomy" id="339671"/>
    <lineage>
        <taxon>Bacteria</taxon>
        <taxon>Pseudomonadati</taxon>
        <taxon>Pseudomonadota</taxon>
        <taxon>Gammaproteobacteria</taxon>
        <taxon>Pasteurellales</taxon>
        <taxon>Pasteurellaceae</taxon>
        <taxon>Actinobacillus</taxon>
    </lineage>
</organism>
<sequence length="452" mass="49499">MKETIVAQATPIGRGGVGILRVSGPLAADVAKAVVGKALKPRFANYLPFKDEDGTTLDQGIALFFQSPNSFTGEDILELQGHGGQVVLDLLLKRILQVNGVRLARPGEFSEQAFLNDKLDLAQAEAIADLIDASSEQAARSALKSLQGEFSNKVNQLVDGVIYLRTYVEAAIDFPDEEIDFLADGKIEGHLNDIIAQLERVRSEAKQGSILREGMKVVIAGRPNAGKSSLLNALAGREAAIVTDIAGTTRDVLREHIHIDGMPLHIIDTAGLRDATDEVERIGITRAWNEIEQADRVLLMLDSSDPDSRQPEKVRSEFLAKLPSHIPVTIIRNKTDLSGENEGVTQENGFTVIRLSAQTRQGIDLLREHLKQSMGYQTGTEGGFLARRRHLDALEKAAYHLRQGHIQLTEFRAGELLAEELRMVQSHLSEITGQFTSDDLLSNIFSSFCIGK</sequence>
<keyword id="KW-0963">Cytoplasm</keyword>
<keyword id="KW-0342">GTP-binding</keyword>
<keyword id="KW-0378">Hydrolase</keyword>
<keyword id="KW-0460">Magnesium</keyword>
<keyword id="KW-0479">Metal-binding</keyword>
<keyword id="KW-0547">Nucleotide-binding</keyword>
<keyword id="KW-0630">Potassium</keyword>
<keyword id="KW-1185">Reference proteome</keyword>
<keyword id="KW-0819">tRNA processing</keyword>
<reference key="1">
    <citation type="journal article" date="2010" name="BMC Genomics">
        <title>A genomic perspective on the potential of Actinobacillus succinogenes for industrial succinate production.</title>
        <authorList>
            <person name="McKinlay J.B."/>
            <person name="Laivenieks M."/>
            <person name="Schindler B.D."/>
            <person name="McKinlay A.A."/>
            <person name="Siddaramappa S."/>
            <person name="Challacombe J.F."/>
            <person name="Lowry S.R."/>
            <person name="Clum A."/>
            <person name="Lapidus A.L."/>
            <person name="Burkhart K.B."/>
            <person name="Harkins V."/>
            <person name="Vieille C."/>
        </authorList>
    </citation>
    <scope>NUCLEOTIDE SEQUENCE [LARGE SCALE GENOMIC DNA]</scope>
    <source>
        <strain>ATCC 55618 / DSM 22257 / CCUG 43843 / 130Z</strain>
    </source>
</reference>
<protein>
    <recommendedName>
        <fullName evidence="1">tRNA modification GTPase MnmE</fullName>
        <ecNumber evidence="1">3.6.-.-</ecNumber>
    </recommendedName>
</protein>
<name>MNME_ACTSZ</name>
<comment type="function">
    <text evidence="1">Exhibits a very high intrinsic GTPase hydrolysis rate. Involved in the addition of a carboxymethylaminomethyl (cmnm) group at the wobble position (U34) of certain tRNAs, forming tRNA-cmnm(5)s(2)U34.</text>
</comment>
<comment type="cofactor">
    <cofactor evidence="1">
        <name>K(+)</name>
        <dbReference type="ChEBI" id="CHEBI:29103"/>
    </cofactor>
    <text evidence="1">Binds 1 potassium ion per subunit.</text>
</comment>
<comment type="subunit">
    <text evidence="1">Homodimer. Heterotetramer of two MnmE and two MnmG subunits.</text>
</comment>
<comment type="subcellular location">
    <subcellularLocation>
        <location evidence="1">Cytoplasm</location>
    </subcellularLocation>
</comment>
<comment type="similarity">
    <text evidence="1">Belongs to the TRAFAC class TrmE-Era-EngA-EngB-Septin-like GTPase superfamily. TrmE GTPase family.</text>
</comment>
<evidence type="ECO:0000255" key="1">
    <source>
        <dbReference type="HAMAP-Rule" id="MF_00379"/>
    </source>
</evidence>
<feature type="chain" id="PRO_0000345701" description="tRNA modification GTPase MnmE">
    <location>
        <begin position="1"/>
        <end position="452"/>
    </location>
</feature>
<feature type="domain" description="TrmE-type G">
    <location>
        <begin position="214"/>
        <end position="375"/>
    </location>
</feature>
<feature type="binding site" evidence="1">
    <location>
        <position position="21"/>
    </location>
    <ligand>
        <name>(6S)-5-formyl-5,6,7,8-tetrahydrofolate</name>
        <dbReference type="ChEBI" id="CHEBI:57457"/>
    </ligand>
</feature>
<feature type="binding site" evidence="1">
    <location>
        <position position="78"/>
    </location>
    <ligand>
        <name>(6S)-5-formyl-5,6,7,8-tetrahydrofolate</name>
        <dbReference type="ChEBI" id="CHEBI:57457"/>
    </ligand>
</feature>
<feature type="binding site" evidence="1">
    <location>
        <position position="118"/>
    </location>
    <ligand>
        <name>(6S)-5-formyl-5,6,7,8-tetrahydrofolate</name>
        <dbReference type="ChEBI" id="CHEBI:57457"/>
    </ligand>
</feature>
<feature type="binding site" evidence="1">
    <location>
        <begin position="224"/>
        <end position="229"/>
    </location>
    <ligand>
        <name>GTP</name>
        <dbReference type="ChEBI" id="CHEBI:37565"/>
    </ligand>
</feature>
<feature type="binding site" evidence="1">
    <location>
        <position position="224"/>
    </location>
    <ligand>
        <name>K(+)</name>
        <dbReference type="ChEBI" id="CHEBI:29103"/>
    </ligand>
</feature>
<feature type="binding site" evidence="1">
    <location>
        <position position="228"/>
    </location>
    <ligand>
        <name>Mg(2+)</name>
        <dbReference type="ChEBI" id="CHEBI:18420"/>
    </ligand>
</feature>
<feature type="binding site" evidence="1">
    <location>
        <begin position="243"/>
        <end position="249"/>
    </location>
    <ligand>
        <name>GTP</name>
        <dbReference type="ChEBI" id="CHEBI:37565"/>
    </ligand>
</feature>
<feature type="binding site" evidence="1">
    <location>
        <position position="243"/>
    </location>
    <ligand>
        <name>K(+)</name>
        <dbReference type="ChEBI" id="CHEBI:29103"/>
    </ligand>
</feature>
<feature type="binding site" evidence="1">
    <location>
        <position position="245"/>
    </location>
    <ligand>
        <name>K(+)</name>
        <dbReference type="ChEBI" id="CHEBI:29103"/>
    </ligand>
</feature>
<feature type="binding site" evidence="1">
    <location>
        <position position="248"/>
    </location>
    <ligand>
        <name>K(+)</name>
        <dbReference type="ChEBI" id="CHEBI:29103"/>
    </ligand>
</feature>
<feature type="binding site" evidence="1">
    <location>
        <position position="249"/>
    </location>
    <ligand>
        <name>Mg(2+)</name>
        <dbReference type="ChEBI" id="CHEBI:18420"/>
    </ligand>
</feature>
<feature type="binding site" evidence="1">
    <location>
        <begin position="268"/>
        <end position="271"/>
    </location>
    <ligand>
        <name>GTP</name>
        <dbReference type="ChEBI" id="CHEBI:37565"/>
    </ligand>
</feature>
<feature type="binding site" evidence="1">
    <location>
        <position position="452"/>
    </location>
    <ligand>
        <name>(6S)-5-formyl-5,6,7,8-tetrahydrofolate</name>
        <dbReference type="ChEBI" id="CHEBI:57457"/>
    </ligand>
</feature>
<accession>A6VQS6</accession>
<gene>
    <name evidence="1" type="primary">mnmE</name>
    <name evidence="1" type="synonym">trmE</name>
    <name type="ordered locus">Asuc_1976</name>
</gene>